<comment type="subcellular location">
    <subcellularLocation>
        <location evidence="1">Nucleus</location>
    </subcellularLocation>
</comment>
<comment type="similarity">
    <text evidence="3">Belongs to the SH3BGR family.</text>
</comment>
<keyword id="KW-0903">Direct protein sequencing</keyword>
<keyword id="KW-0539">Nucleus</keyword>
<keyword id="KW-1185">Reference proteome</keyword>
<keyword id="KW-0729">SH3-binding</keyword>
<reference key="1">
    <citation type="journal article" date="2005" name="Science">
        <title>The transcriptional landscape of the mammalian genome.</title>
        <authorList>
            <person name="Carninci P."/>
            <person name="Kasukawa T."/>
            <person name="Katayama S."/>
            <person name="Gough J."/>
            <person name="Frith M.C."/>
            <person name="Maeda N."/>
            <person name="Oyama R."/>
            <person name="Ravasi T."/>
            <person name="Lenhard B."/>
            <person name="Wells C."/>
            <person name="Kodzius R."/>
            <person name="Shimokawa K."/>
            <person name="Bajic V.B."/>
            <person name="Brenner S.E."/>
            <person name="Batalov S."/>
            <person name="Forrest A.R."/>
            <person name="Zavolan M."/>
            <person name="Davis M.J."/>
            <person name="Wilming L.G."/>
            <person name="Aidinis V."/>
            <person name="Allen J.E."/>
            <person name="Ambesi-Impiombato A."/>
            <person name="Apweiler R."/>
            <person name="Aturaliya R.N."/>
            <person name="Bailey T.L."/>
            <person name="Bansal M."/>
            <person name="Baxter L."/>
            <person name="Beisel K.W."/>
            <person name="Bersano T."/>
            <person name="Bono H."/>
            <person name="Chalk A.M."/>
            <person name="Chiu K.P."/>
            <person name="Choudhary V."/>
            <person name="Christoffels A."/>
            <person name="Clutterbuck D.R."/>
            <person name="Crowe M.L."/>
            <person name="Dalla E."/>
            <person name="Dalrymple B.P."/>
            <person name="de Bono B."/>
            <person name="Della Gatta G."/>
            <person name="di Bernardo D."/>
            <person name="Down T."/>
            <person name="Engstrom P."/>
            <person name="Fagiolini M."/>
            <person name="Faulkner G."/>
            <person name="Fletcher C.F."/>
            <person name="Fukushima T."/>
            <person name="Furuno M."/>
            <person name="Futaki S."/>
            <person name="Gariboldi M."/>
            <person name="Georgii-Hemming P."/>
            <person name="Gingeras T.R."/>
            <person name="Gojobori T."/>
            <person name="Green R.E."/>
            <person name="Gustincich S."/>
            <person name="Harbers M."/>
            <person name="Hayashi Y."/>
            <person name="Hensch T.K."/>
            <person name="Hirokawa N."/>
            <person name="Hill D."/>
            <person name="Huminiecki L."/>
            <person name="Iacono M."/>
            <person name="Ikeo K."/>
            <person name="Iwama A."/>
            <person name="Ishikawa T."/>
            <person name="Jakt M."/>
            <person name="Kanapin A."/>
            <person name="Katoh M."/>
            <person name="Kawasawa Y."/>
            <person name="Kelso J."/>
            <person name="Kitamura H."/>
            <person name="Kitano H."/>
            <person name="Kollias G."/>
            <person name="Krishnan S.P."/>
            <person name="Kruger A."/>
            <person name="Kummerfeld S.K."/>
            <person name="Kurochkin I.V."/>
            <person name="Lareau L.F."/>
            <person name="Lazarevic D."/>
            <person name="Lipovich L."/>
            <person name="Liu J."/>
            <person name="Liuni S."/>
            <person name="McWilliam S."/>
            <person name="Madan Babu M."/>
            <person name="Madera M."/>
            <person name="Marchionni L."/>
            <person name="Matsuda H."/>
            <person name="Matsuzawa S."/>
            <person name="Miki H."/>
            <person name="Mignone F."/>
            <person name="Miyake S."/>
            <person name="Morris K."/>
            <person name="Mottagui-Tabar S."/>
            <person name="Mulder N."/>
            <person name="Nakano N."/>
            <person name="Nakauchi H."/>
            <person name="Ng P."/>
            <person name="Nilsson R."/>
            <person name="Nishiguchi S."/>
            <person name="Nishikawa S."/>
            <person name="Nori F."/>
            <person name="Ohara O."/>
            <person name="Okazaki Y."/>
            <person name="Orlando V."/>
            <person name="Pang K.C."/>
            <person name="Pavan W.J."/>
            <person name="Pavesi G."/>
            <person name="Pesole G."/>
            <person name="Petrovsky N."/>
            <person name="Piazza S."/>
            <person name="Reed J."/>
            <person name="Reid J.F."/>
            <person name="Ring B.Z."/>
            <person name="Ringwald M."/>
            <person name="Rost B."/>
            <person name="Ruan Y."/>
            <person name="Salzberg S.L."/>
            <person name="Sandelin A."/>
            <person name="Schneider C."/>
            <person name="Schoenbach C."/>
            <person name="Sekiguchi K."/>
            <person name="Semple C.A."/>
            <person name="Seno S."/>
            <person name="Sessa L."/>
            <person name="Sheng Y."/>
            <person name="Shibata Y."/>
            <person name="Shimada H."/>
            <person name="Shimada K."/>
            <person name="Silva D."/>
            <person name="Sinclair B."/>
            <person name="Sperling S."/>
            <person name="Stupka E."/>
            <person name="Sugiura K."/>
            <person name="Sultana R."/>
            <person name="Takenaka Y."/>
            <person name="Taki K."/>
            <person name="Tammoja K."/>
            <person name="Tan S.L."/>
            <person name="Tang S."/>
            <person name="Taylor M.S."/>
            <person name="Tegner J."/>
            <person name="Teichmann S.A."/>
            <person name="Ueda H.R."/>
            <person name="van Nimwegen E."/>
            <person name="Verardo R."/>
            <person name="Wei C.L."/>
            <person name="Yagi K."/>
            <person name="Yamanishi H."/>
            <person name="Zabarovsky E."/>
            <person name="Zhu S."/>
            <person name="Zimmer A."/>
            <person name="Hide W."/>
            <person name="Bult C."/>
            <person name="Grimmond S.M."/>
            <person name="Teasdale R.D."/>
            <person name="Liu E.T."/>
            <person name="Brusic V."/>
            <person name="Quackenbush J."/>
            <person name="Wahlestedt C."/>
            <person name="Mattick J.S."/>
            <person name="Hume D.A."/>
            <person name="Kai C."/>
            <person name="Sasaki D."/>
            <person name="Tomaru Y."/>
            <person name="Fukuda S."/>
            <person name="Kanamori-Katayama M."/>
            <person name="Suzuki M."/>
            <person name="Aoki J."/>
            <person name="Arakawa T."/>
            <person name="Iida J."/>
            <person name="Imamura K."/>
            <person name="Itoh M."/>
            <person name="Kato T."/>
            <person name="Kawaji H."/>
            <person name="Kawagashira N."/>
            <person name="Kawashima T."/>
            <person name="Kojima M."/>
            <person name="Kondo S."/>
            <person name="Konno H."/>
            <person name="Nakano K."/>
            <person name="Ninomiya N."/>
            <person name="Nishio T."/>
            <person name="Okada M."/>
            <person name="Plessy C."/>
            <person name="Shibata K."/>
            <person name="Shiraki T."/>
            <person name="Suzuki S."/>
            <person name="Tagami M."/>
            <person name="Waki K."/>
            <person name="Watahiki A."/>
            <person name="Okamura-Oho Y."/>
            <person name="Suzuki H."/>
            <person name="Kawai J."/>
            <person name="Hayashizaki Y."/>
        </authorList>
    </citation>
    <scope>NUCLEOTIDE SEQUENCE [LARGE SCALE MRNA]</scope>
    <source>
        <strain>C57BL/6J</strain>
        <tissue>Placenta</tissue>
        <tissue>Retina</tissue>
    </source>
</reference>
<reference key="2">
    <citation type="journal article" date="2004" name="Genome Res.">
        <title>The status, quality, and expansion of the NIH full-length cDNA project: the Mammalian Gene Collection (MGC).</title>
        <authorList>
            <consortium name="The MGC Project Team"/>
        </authorList>
    </citation>
    <scope>NUCLEOTIDE SEQUENCE [LARGE SCALE MRNA]</scope>
    <source>
        <strain>FVB/N-3</strain>
    </source>
</reference>
<reference key="3">
    <citation type="submission" date="2007-03" db="UniProtKB">
        <authorList>
            <person name="Lubec G."/>
            <person name="Klug S."/>
        </authorList>
    </citation>
    <scope>PROTEIN SEQUENCE OF 58-86</scope>
    <scope>IDENTIFICATION BY MASS SPECTROMETRY</scope>
    <source>
        <tissue>Hippocampus</tissue>
    </source>
</reference>
<reference key="4">
    <citation type="journal article" date="2010" name="Cell">
        <title>A tissue-specific atlas of mouse protein phosphorylation and expression.</title>
        <authorList>
            <person name="Huttlin E.L."/>
            <person name="Jedrychowski M.P."/>
            <person name="Elias J.E."/>
            <person name="Goswami T."/>
            <person name="Rad R."/>
            <person name="Beausoleil S.A."/>
            <person name="Villen J."/>
            <person name="Haas W."/>
            <person name="Sowa M.E."/>
            <person name="Gygi S.P."/>
        </authorList>
    </citation>
    <scope>IDENTIFICATION BY MASS SPECTROMETRY [LARGE SCALE ANALYSIS]</scope>
    <source>
        <tissue>Brain</tissue>
        <tissue>Kidney</tissue>
        <tissue>Liver</tissue>
        <tissue>Pancreas</tissue>
        <tissue>Testis</tissue>
    </source>
</reference>
<evidence type="ECO:0000250" key="1"/>
<evidence type="ECO:0000255" key="2"/>
<evidence type="ECO:0000305" key="3"/>
<accession>Q8BG73</accession>
<accession>Q3TV64</accession>
<gene>
    <name type="primary">Sh3bgrl2</name>
</gene>
<dbReference type="EMBL" id="BC038473">
    <property type="protein sequence ID" value="AAH38473.1"/>
    <property type="molecule type" value="mRNA"/>
</dbReference>
<dbReference type="EMBL" id="AK076202">
    <property type="protein sequence ID" value="BAC36251.1"/>
    <property type="molecule type" value="mRNA"/>
</dbReference>
<dbReference type="EMBL" id="AK160357">
    <property type="protein sequence ID" value="BAE35756.1"/>
    <property type="molecule type" value="mRNA"/>
</dbReference>
<dbReference type="CCDS" id="CCDS40708.1"/>
<dbReference type="RefSeq" id="NP_766095.1">
    <property type="nucleotide sequence ID" value="NM_172507.5"/>
</dbReference>
<dbReference type="SMR" id="Q8BG73"/>
<dbReference type="BioGRID" id="229337">
    <property type="interactions" value="1"/>
</dbReference>
<dbReference type="FunCoup" id="Q8BG73">
    <property type="interactions" value="1107"/>
</dbReference>
<dbReference type="IntAct" id="Q8BG73">
    <property type="interactions" value="1"/>
</dbReference>
<dbReference type="MINT" id="Q8BG73"/>
<dbReference type="STRING" id="10090.ENSMUSP00000108841"/>
<dbReference type="iPTMnet" id="Q8BG73"/>
<dbReference type="PhosphoSitePlus" id="Q8BG73"/>
<dbReference type="jPOST" id="Q8BG73"/>
<dbReference type="PaxDb" id="10090-ENSMUSP00000108841"/>
<dbReference type="PeptideAtlas" id="Q8BG73"/>
<dbReference type="ProteomicsDB" id="261211"/>
<dbReference type="Antibodypedia" id="64235">
    <property type="antibodies" value="22 antibodies from 14 providers"/>
</dbReference>
<dbReference type="DNASU" id="212531"/>
<dbReference type="Ensembl" id="ENSMUST00000113215.10">
    <property type="protein sequence ID" value="ENSMUSP00000108841.4"/>
    <property type="gene ID" value="ENSMUSG00000032261.17"/>
</dbReference>
<dbReference type="GeneID" id="212531"/>
<dbReference type="KEGG" id="mmu:212531"/>
<dbReference type="UCSC" id="uc009qwl.1">
    <property type="organism name" value="mouse"/>
</dbReference>
<dbReference type="AGR" id="MGI:1915350"/>
<dbReference type="CTD" id="83699"/>
<dbReference type="MGI" id="MGI:1915350">
    <property type="gene designation" value="Sh3bgrl2"/>
</dbReference>
<dbReference type="VEuPathDB" id="HostDB:ENSMUSG00000032261"/>
<dbReference type="eggNOG" id="KOG4023">
    <property type="taxonomic scope" value="Eukaryota"/>
</dbReference>
<dbReference type="GeneTree" id="ENSGT00940000159157"/>
<dbReference type="HOGENOM" id="CLU_084862_3_0_1"/>
<dbReference type="InParanoid" id="Q8BG73"/>
<dbReference type="OMA" id="MYKNIPK"/>
<dbReference type="OrthoDB" id="17208at9989"/>
<dbReference type="PhylomeDB" id="Q8BG73"/>
<dbReference type="TreeFam" id="TF105574"/>
<dbReference type="BioGRID-ORCS" id="212531">
    <property type="hits" value="2 hits in 76 CRISPR screens"/>
</dbReference>
<dbReference type="ChiTaRS" id="Sh3bgrl2">
    <property type="organism name" value="mouse"/>
</dbReference>
<dbReference type="PRO" id="PR:Q8BG73"/>
<dbReference type="Proteomes" id="UP000000589">
    <property type="component" value="Chromosome 9"/>
</dbReference>
<dbReference type="RNAct" id="Q8BG73">
    <property type="molecule type" value="protein"/>
</dbReference>
<dbReference type="Bgee" id="ENSMUSG00000032261">
    <property type="expression patterns" value="Expressed in urinary bladder urothelium and 228 other cell types or tissues"/>
</dbReference>
<dbReference type="ExpressionAtlas" id="Q8BG73">
    <property type="expression patterns" value="baseline and differential"/>
</dbReference>
<dbReference type="GO" id="GO:0031965">
    <property type="term" value="C:nuclear membrane"/>
    <property type="evidence" value="ECO:0007669"/>
    <property type="project" value="Ensembl"/>
</dbReference>
<dbReference type="GO" id="GO:0005654">
    <property type="term" value="C:nucleoplasm"/>
    <property type="evidence" value="ECO:0007669"/>
    <property type="project" value="Ensembl"/>
</dbReference>
<dbReference type="GO" id="GO:0017124">
    <property type="term" value="F:SH3 domain binding"/>
    <property type="evidence" value="ECO:0007669"/>
    <property type="project" value="UniProtKB-KW"/>
</dbReference>
<dbReference type="CDD" id="cd03030">
    <property type="entry name" value="GRX_SH3BGR"/>
    <property type="match status" value="1"/>
</dbReference>
<dbReference type="FunFam" id="3.40.30.10:FF:000065">
    <property type="entry name" value="SH3 domain-binding glutamic acid-rich-like protein"/>
    <property type="match status" value="1"/>
</dbReference>
<dbReference type="Gene3D" id="3.40.30.10">
    <property type="entry name" value="Glutaredoxin"/>
    <property type="match status" value="1"/>
</dbReference>
<dbReference type="InterPro" id="IPR006993">
    <property type="entry name" value="Glut_rich_SH3-bd"/>
</dbReference>
<dbReference type="InterPro" id="IPR051033">
    <property type="entry name" value="SH3BGR"/>
</dbReference>
<dbReference type="InterPro" id="IPR036249">
    <property type="entry name" value="Thioredoxin-like_sf"/>
</dbReference>
<dbReference type="PANTHER" id="PTHR12232">
    <property type="entry name" value="SH3 DOMAIN-BINDING GLUTAMIC ACID-RICH-LIKE PROTEIN"/>
    <property type="match status" value="1"/>
</dbReference>
<dbReference type="PANTHER" id="PTHR12232:SF4">
    <property type="entry name" value="SH3 DOMAIN-BINDING GLUTAMIC ACID-RICH-LIKE PROTEIN 2"/>
    <property type="match status" value="1"/>
</dbReference>
<dbReference type="Pfam" id="PF04908">
    <property type="entry name" value="SH3BGR"/>
    <property type="match status" value="1"/>
</dbReference>
<dbReference type="PIRSF" id="PIRSF008142">
    <property type="entry name" value="SH3-bind_E-rich_L"/>
    <property type="match status" value="1"/>
</dbReference>
<dbReference type="SUPFAM" id="SSF52833">
    <property type="entry name" value="Thioredoxin-like"/>
    <property type="match status" value="1"/>
</dbReference>
<protein>
    <recommendedName>
        <fullName>SH3 domain-binding glutamic acid-rich-like protein 2</fullName>
    </recommendedName>
</protein>
<name>SH3L2_MOUSE</name>
<proteinExistence type="evidence at protein level"/>
<feature type="chain" id="PRO_0000220748" description="SH3 domain-binding glutamic acid-rich-like protein 2">
    <location>
        <begin position="1"/>
        <end position="107"/>
    </location>
</feature>
<feature type="short sequence motif" description="SH3-binding" evidence="2">
    <location>
        <begin position="61"/>
        <end position="67"/>
    </location>
</feature>
<organism>
    <name type="scientific">Mus musculus</name>
    <name type="common">Mouse</name>
    <dbReference type="NCBI Taxonomy" id="10090"/>
    <lineage>
        <taxon>Eukaryota</taxon>
        <taxon>Metazoa</taxon>
        <taxon>Chordata</taxon>
        <taxon>Craniata</taxon>
        <taxon>Vertebrata</taxon>
        <taxon>Euteleostomi</taxon>
        <taxon>Mammalia</taxon>
        <taxon>Eutheria</taxon>
        <taxon>Euarchontoglires</taxon>
        <taxon>Glires</taxon>
        <taxon>Rodentia</taxon>
        <taxon>Myomorpha</taxon>
        <taxon>Muroidea</taxon>
        <taxon>Muridae</taxon>
        <taxon>Murinae</taxon>
        <taxon>Mus</taxon>
        <taxon>Mus</taxon>
    </lineage>
</organism>
<sequence>MVVRVFVASCSGFVAIKKKQQDVVRFLEANKIEFEEVDITMSEEQRQWMYKNIPPEKKPAQGNPLPPQIFNGDRYCGDYDSFFESKESNTVFSFLGLKPRPASTAEP</sequence>